<gene>
    <name evidence="4" type="primary">rnp-1</name>
    <name evidence="4" type="ORF">ZK863.7</name>
</gene>
<sequence>MPSKLFVGNLPDNVDSNKLKQVFQPFCKVTECDIVKNYAFVHIEEDDVDPIITRLTGYTIDGKVVNIKKSTSKLRPTPGMPNRCFRCQSDEHRTPQCPQDPTNNQKTENGVQTLKFDLTSGAGVKRSAGDPIIDSAKRIAYGAQSVVEPEIPQPMDPDLQALYQEYQLSRQRYVYYRDRLLKEMEAKQHGSTAGFALSSSSTVPVPVASAPPGATQLSAAPVSYQPNAPPVIASINAPYAVASNLRAPYALQSAPYASAASAPYGSVTPAGAPSNVMTTQQYLQQIQHQQATGSPAPVPAPPRLY</sequence>
<proteinExistence type="evidence at transcript level"/>
<accession>Q10667</accession>
<keyword id="KW-0479">Metal-binding</keyword>
<keyword id="KW-1185">Reference proteome</keyword>
<keyword id="KW-0694">RNA-binding</keyword>
<keyword id="KW-0862">Zinc</keyword>
<keyword id="KW-0863">Zinc-finger</keyword>
<comment type="function">
    <text evidence="3">RNA-binding protein that is required for the germ line to transition from spermatogenesis to oogenesis and allow for normal oocyte development.</text>
</comment>
<comment type="tissue specificity">
    <text evidence="3">Expressed throughout the germline.</text>
</comment>
<comment type="disruption phenotype">
    <text evidence="3">Hermaphrodites are sterile and produce no oocytes due to the failure of the germ line to transition from spermatogenesis to oogenesis during oocyte development.</text>
</comment>
<organism>
    <name type="scientific">Caenorhabditis elegans</name>
    <dbReference type="NCBI Taxonomy" id="6239"/>
    <lineage>
        <taxon>Eukaryota</taxon>
        <taxon>Metazoa</taxon>
        <taxon>Ecdysozoa</taxon>
        <taxon>Nematoda</taxon>
        <taxon>Chromadorea</taxon>
        <taxon>Rhabditida</taxon>
        <taxon>Rhabditina</taxon>
        <taxon>Rhabditomorpha</taxon>
        <taxon>Rhabditoidea</taxon>
        <taxon>Rhabditidae</taxon>
        <taxon>Peloderinae</taxon>
        <taxon>Caenorhabditis</taxon>
    </lineage>
</organism>
<reference key="1">
    <citation type="journal article" date="1995" name="Development">
        <title>DPY-30, a nuclear protein essential early in embryogenesis for Caenorhabditis elegans dosage compensation.</title>
        <authorList>
            <person name="Hsu D.R."/>
            <person name="Chuang P.-T."/>
            <person name="Meyer B.J."/>
        </authorList>
    </citation>
    <scope>NUCLEOTIDE SEQUENCE [GENOMIC DNA]</scope>
    <scope>FUNCTION</scope>
    <source>
        <strain>Bristol N2</strain>
    </source>
</reference>
<reference key="2">
    <citation type="journal article" date="1998" name="Science">
        <title>Genome sequence of the nematode C. elegans: a platform for investigating biology.</title>
        <authorList>
            <consortium name="The C. elegans sequencing consortium"/>
        </authorList>
    </citation>
    <scope>NUCLEOTIDE SEQUENCE [LARGE SCALE GENOMIC DNA]</scope>
    <source>
        <strain>Bristol N2</strain>
    </source>
</reference>
<reference key="3">
    <citation type="journal article" date="2014" name="Genetics">
        <title>Translational control of the oogenic program by components of OMA ribonucleoprotein particles in Caenorhabditis elegans.</title>
        <authorList>
            <person name="Spike C.A."/>
            <person name="Coetzee D."/>
            <person name="Nishi Y."/>
            <person name="Guven-Ozkan T."/>
            <person name="Oldenbroek M."/>
            <person name="Yamamoto I."/>
            <person name="Lin R."/>
            <person name="Greenstein D."/>
        </authorList>
    </citation>
    <scope>FUNCTION</scope>
    <scope>TISSUE SPECIFICITY</scope>
    <scope>DISRUPTION PHENOTYPE</scope>
</reference>
<name>RNP1_CAEEL</name>
<evidence type="ECO:0000255" key="1">
    <source>
        <dbReference type="PROSITE-ProRule" id="PRU00176"/>
    </source>
</evidence>
<evidence type="ECO:0000256" key="2">
    <source>
        <dbReference type="SAM" id="MobiDB-lite"/>
    </source>
</evidence>
<evidence type="ECO:0000269" key="3">
    <source>
    </source>
</evidence>
<evidence type="ECO:0000312" key="4">
    <source>
        <dbReference type="WormBase" id="ZK863.7a"/>
    </source>
</evidence>
<feature type="chain" id="PRO_0000081809" description="RNA-binding protein rnp-1">
    <location>
        <begin position="1"/>
        <end position="305"/>
    </location>
</feature>
<feature type="domain" description="RRM" evidence="1">
    <location>
        <begin position="3"/>
        <end position="72"/>
    </location>
</feature>
<feature type="zinc finger region" description="CCHC-type">
    <location>
        <begin position="84"/>
        <end position="97"/>
    </location>
</feature>
<feature type="region of interest" description="Disordered" evidence="2">
    <location>
        <begin position="284"/>
        <end position="305"/>
    </location>
</feature>
<feature type="compositionally biased region" description="Pro residues" evidence="2">
    <location>
        <begin position="296"/>
        <end position="305"/>
    </location>
</feature>
<protein>
    <recommendedName>
        <fullName>RNA-binding protein rnp-1</fullName>
    </recommendedName>
</protein>
<dbReference type="EMBL" id="U21302">
    <property type="protein sequence ID" value="AAA92287.1"/>
    <property type="molecule type" value="Genomic_DNA"/>
</dbReference>
<dbReference type="EMBL" id="Z78019">
    <property type="protein sequence ID" value="CAB01455.1"/>
    <property type="molecule type" value="Genomic_DNA"/>
</dbReference>
<dbReference type="PIR" id="T28063">
    <property type="entry name" value="T28063"/>
</dbReference>
<dbReference type="RefSeq" id="NP_001256408.1">
    <property type="nucleotide sequence ID" value="NM_001269479.5"/>
</dbReference>
<dbReference type="SMR" id="Q10667"/>
<dbReference type="BioGRID" id="44695">
    <property type="interactions" value="8"/>
</dbReference>
<dbReference type="DIP" id="DIP-24668N"/>
<dbReference type="FunCoup" id="Q10667">
    <property type="interactions" value="40"/>
</dbReference>
<dbReference type="IntAct" id="Q10667">
    <property type="interactions" value="5"/>
</dbReference>
<dbReference type="STRING" id="6239.ZK863.7a.1"/>
<dbReference type="PaxDb" id="6239-ZK863.7a"/>
<dbReference type="PeptideAtlas" id="Q10667"/>
<dbReference type="EnsemblMetazoa" id="ZK863.7a.1">
    <property type="protein sequence ID" value="ZK863.7a.1"/>
    <property type="gene ID" value="WBGene00004384"/>
</dbReference>
<dbReference type="GeneID" id="179672"/>
<dbReference type="KEGG" id="cel:CELE_ZK863.7"/>
<dbReference type="UCSC" id="ZK863.7">
    <property type="organism name" value="c. elegans"/>
</dbReference>
<dbReference type="AGR" id="WB:WBGene00004384"/>
<dbReference type="CTD" id="179672"/>
<dbReference type="WormBase" id="ZK863.7a">
    <property type="protein sequence ID" value="CE15447"/>
    <property type="gene ID" value="WBGene00004384"/>
    <property type="gene designation" value="rnp-1"/>
</dbReference>
<dbReference type="eggNOG" id="KOG0109">
    <property type="taxonomic scope" value="Eukaryota"/>
</dbReference>
<dbReference type="GeneTree" id="ENSGT00940000172179"/>
<dbReference type="HOGENOM" id="CLU_922053_0_0_1"/>
<dbReference type="InParanoid" id="Q10667"/>
<dbReference type="OMA" id="TKYFYFR"/>
<dbReference type="OrthoDB" id="79941at2759"/>
<dbReference type="Reactome" id="R-CEL-8941326">
    <property type="pathway name" value="RUNX2 regulates bone development"/>
</dbReference>
<dbReference type="PRO" id="PR:Q10667"/>
<dbReference type="Proteomes" id="UP000001940">
    <property type="component" value="Chromosome V"/>
</dbReference>
<dbReference type="Bgee" id="WBGene00004384">
    <property type="expression patterns" value="Expressed in embryo and 4 other cell types or tissues"/>
</dbReference>
<dbReference type="ExpressionAtlas" id="Q10667">
    <property type="expression patterns" value="baseline and differential"/>
</dbReference>
<dbReference type="GO" id="GO:0016607">
    <property type="term" value="C:nuclear speck"/>
    <property type="evidence" value="ECO:0000318"/>
    <property type="project" value="GO_Central"/>
</dbReference>
<dbReference type="GO" id="GO:0003723">
    <property type="term" value="F:RNA binding"/>
    <property type="evidence" value="ECO:0000318"/>
    <property type="project" value="GO_Central"/>
</dbReference>
<dbReference type="GO" id="GO:0008270">
    <property type="term" value="F:zinc ion binding"/>
    <property type="evidence" value="ECO:0007669"/>
    <property type="project" value="UniProtKB-KW"/>
</dbReference>
<dbReference type="GO" id="GO:0048600">
    <property type="term" value="P:oocyte fate commitment"/>
    <property type="evidence" value="ECO:0000315"/>
    <property type="project" value="UniProtKB"/>
</dbReference>
<dbReference type="GO" id="GO:0060282">
    <property type="term" value="P:positive regulation of oocyte development"/>
    <property type="evidence" value="ECO:0000315"/>
    <property type="project" value="UniProtKB"/>
</dbReference>
<dbReference type="GO" id="GO:0007283">
    <property type="term" value="P:spermatogenesis"/>
    <property type="evidence" value="ECO:0000316"/>
    <property type="project" value="UniProtKB"/>
</dbReference>
<dbReference type="CDD" id="cd12343">
    <property type="entry name" value="RRM1_2_CoAA_like"/>
    <property type="match status" value="1"/>
</dbReference>
<dbReference type="FunFam" id="3.30.70.330:FF:000957">
    <property type="entry name" value="RNA-binding protein rnp-1"/>
    <property type="match status" value="1"/>
</dbReference>
<dbReference type="Gene3D" id="3.30.70.330">
    <property type="match status" value="1"/>
</dbReference>
<dbReference type="InterPro" id="IPR050502">
    <property type="entry name" value="Euk_RNA-bind_prot"/>
</dbReference>
<dbReference type="InterPro" id="IPR012677">
    <property type="entry name" value="Nucleotide-bd_a/b_plait_sf"/>
</dbReference>
<dbReference type="InterPro" id="IPR035979">
    <property type="entry name" value="RBD_domain_sf"/>
</dbReference>
<dbReference type="InterPro" id="IPR000504">
    <property type="entry name" value="RRM_dom"/>
</dbReference>
<dbReference type="PANTHER" id="PTHR48025">
    <property type="entry name" value="OS02G0815200 PROTEIN"/>
    <property type="match status" value="1"/>
</dbReference>
<dbReference type="PANTHER" id="PTHR48025:SF1">
    <property type="entry name" value="RRM DOMAIN-CONTAINING PROTEIN"/>
    <property type="match status" value="1"/>
</dbReference>
<dbReference type="Pfam" id="PF00076">
    <property type="entry name" value="RRM_1"/>
    <property type="match status" value="1"/>
</dbReference>
<dbReference type="SMART" id="SM00360">
    <property type="entry name" value="RRM"/>
    <property type="match status" value="1"/>
</dbReference>
<dbReference type="SUPFAM" id="SSF54928">
    <property type="entry name" value="RNA-binding domain, RBD"/>
    <property type="match status" value="1"/>
</dbReference>
<dbReference type="PROSITE" id="PS50102">
    <property type="entry name" value="RRM"/>
    <property type="match status" value="1"/>
</dbReference>